<organism>
    <name type="scientific">Arabidopsis thaliana</name>
    <name type="common">Mouse-ear cress</name>
    <dbReference type="NCBI Taxonomy" id="3702"/>
    <lineage>
        <taxon>Eukaryota</taxon>
        <taxon>Viridiplantae</taxon>
        <taxon>Streptophyta</taxon>
        <taxon>Embryophyta</taxon>
        <taxon>Tracheophyta</taxon>
        <taxon>Spermatophyta</taxon>
        <taxon>Magnoliopsida</taxon>
        <taxon>eudicotyledons</taxon>
        <taxon>Gunneridae</taxon>
        <taxon>Pentapetalae</taxon>
        <taxon>rosids</taxon>
        <taxon>malvids</taxon>
        <taxon>Brassicales</taxon>
        <taxon>Brassicaceae</taxon>
        <taxon>Camelineae</taxon>
        <taxon>Arabidopsis</taxon>
    </lineage>
</organism>
<comment type="function">
    <text evidence="5 7">Transcriptional regulator required for the maintenance of the plant vegetative phase. In association with CHR11 or CHR17 may prevent the early activation of the vegetative-to-reproductive transition by regulating key genes that contribute to flower timing, such as FT, SEP1, SEP3, AGL8/FUL, SOC1 and FLC (PubMed:22694359). Involved in the transcriptional regulation of seed-specific gene expression (PubMed:23872538).</text>
</comment>
<comment type="subunit">
    <text evidence="5 6">Interacts with CHR11 (PubMed:22694359). Interacts (via the DDT domain) with CHR11 (via C-terminus) (PubMed:23691993).</text>
</comment>
<comment type="subcellular location">
    <subcellularLocation>
        <location evidence="5">Nucleus</location>
    </subcellularLocation>
</comment>
<comment type="alternative products">
    <event type="alternative splicing"/>
    <isoform>
        <id>Q9FFH1-1</id>
        <name>1</name>
        <sequence type="displayed"/>
    </isoform>
    <text evidence="9">A number of isoforms are produced. According to EST sequences.</text>
</comment>
<comment type="tissue specificity">
    <text evidence="5">Highly expressed in growing tissues such as inflorescence and flower meristems, young leaves and floral organs. Expressed in roots, rosette and cauline leaves, stems, flowers, inflorescences and siliques.</text>
</comment>
<comment type="disruption phenotype">
    <text evidence="5">No visible phenotype under normal growth conditions, but the double mutant plants rlt-1 and rlt2-1 are small and display early flowering.</text>
</comment>
<comment type="sequence caution" evidence="9">
    <conflict type="erroneous initiation">
        <sequence resource="EMBL-CDS" id="AAK68833"/>
    </conflict>
    <text>Truncated N-terminus.</text>
</comment>
<sequence>MEGGSEKTTPEGCGGESKSKRKMKTAAQLEVLENTYSAEPYPSEAIRADLSVKLNLSDRQLQMWFCHRRLKERKSTTPSKRQRKELVTPTAMESWEPPVNAGDLVAGNELDSRRAARGSGGSGVTVVRRFNEPSSAEVRAIGYVEAQLGERLRDNGPVLGMEFDPLPPGAFGMPIEMPSHRKATRQAFETNIYVRSDVKPIKDHVRPIREYQFIPELPSSRTDHSERVSPSHHFGVPLDGSVMRVSAVSAGHRDDYKISPQIPNLNLATHQGKPGHVYSPNLVEYDSPYQKSYMDTAAQVHDDPFVKSEREVGNEDEDDDALQLERHRKNEEARIAREVEAHEKRIRRELEKQDMLRRKREEQIRKEMERQDRERRKEEERLLREKQREEERYLKEQMRELQRREKFLKKETIRAEKMRQKEEMRKEKEVARLKAANERAIARKIAKESMELIEDERLELMEVAALTKGLPSMLALDFETLQNLDEYRDKQAIFPPTSVKLKKPFAVKPWNGSDENVANLLMVWRFLITFADVLGLWPFTLDEFAQAFHDYDPRLMGEIHIVLLKTIIKDIEGVVRTLSTGVGANQNVAANPGGGHPHVVEGAYAWGFDIRSWRKNLNVFTWPEILRQLALSAGLGPQLKKMNIRTVSVHDDNEANNSENVIFNLRKGVAAENAFAKMQERGLSNPRRSRHRLTPGTVKFAAFHVLSLEGEKGLNILEVAEKIQKSGLRDLTTSRTPEASVAAALSRDTKLFERVAPSTYCVRASYRKDAGDAETIFAEARERIRAFKSGITDVEDVDDAERDEDSESDVGEDPEVDVNLKKEDPNPLKVENLIGVEPLLENGKLDTVPMKTELGLPLTPSLPEEMKDEKRDDTLADQSLEDAVANGEDSACFDESKLGEQWVQGLVEGDYSNLSSEERLNALVALIGIATEGNTIRIALEERLEVASALKKQMWGEVQLDKRWKEESLIRANYLSYPTAKPGLNIATPASGNQESSSADVTPISSQDPVSLPQIDVNNVIAGPSLQLQENVPGVENLQYQQQQGYTADRERLRAQLKAYVGYKAEELYVYRSLPLGQDRRRNRYWRFSASASRNDPGCGRIFVELQDGRWRLIDSEEAFDYLVKSLDVRGVRESHLHFMLLKIEASFKEALRRNVAANPGVCSISSSLDSDTAEISTTFKIELGDSNAVERCSVLQRFHSFEKWMWDNMLHPSALSAFKYGAKQSSPLFRICRICAELHFVGDICCPSCGQMHAGPDVGELCFAEQVAQLGDNLRRGDTGFILRSSILSPLRIRLLKVQLALVEASLPPEGLEAFWTENLRKSWGMKLLSSSSHEDLYQVLTTLEAALKRDFLSSNFETTSELLGLQEGALASDLTCGVNVLPWIPKTAGGVALRLFDFDSSIVYTPDQNNDPLKDKESEDFVGLETNILRNLHEKDVMETPVQVAAYKQEENWTDPGLGGVSSSGRGGRPPRGRGRPRARGNGKKPAVSVKPPRGAANSNGETMLRPRAQPRGGRKNGRRSGTKGRKRPTQGTLGICNEVGGGRRVKEVAVTAKTSLPDNDDDWIETPELQDDDGEASSSGRSFQYEDYDDDDVMAPIDDFDGGGESSKLVGRGEFSLHSDDEYEEEEEEEEDMNMKMDVNVVDDEDEDYINEDSYGRKQHGISISNDAATRKRFNKFEDPDLTSSSSSDFQ</sequence>
<proteinExistence type="evidence at protein level"/>
<reference key="1">
    <citation type="journal article" date="1997" name="DNA Res.">
        <title>Structural analysis of Arabidopsis thaliana chromosome 5. I. Sequence features of the 1.6 Mb regions covered by twenty physically assigned P1 clones.</title>
        <authorList>
            <person name="Sato S."/>
            <person name="Kotani H."/>
            <person name="Nakamura Y."/>
            <person name="Kaneko T."/>
            <person name="Asamizu E."/>
            <person name="Fukami M."/>
            <person name="Miyajima N."/>
            <person name="Tabata S."/>
        </authorList>
    </citation>
    <scope>NUCLEOTIDE SEQUENCE [LARGE SCALE GENOMIC DNA]</scope>
    <source>
        <strain>cv. Columbia</strain>
    </source>
</reference>
<reference key="2">
    <citation type="journal article" date="2017" name="Plant J.">
        <title>Araport11: a complete reannotation of the Arabidopsis thaliana reference genome.</title>
        <authorList>
            <person name="Cheng C.Y."/>
            <person name="Krishnakumar V."/>
            <person name="Chan A.P."/>
            <person name="Thibaud-Nissen F."/>
            <person name="Schobel S."/>
            <person name="Town C.D."/>
        </authorList>
    </citation>
    <scope>GENOME REANNOTATION</scope>
    <source>
        <strain>cv. Columbia</strain>
    </source>
</reference>
<reference key="3">
    <citation type="journal article" date="2003" name="Science">
        <title>Empirical analysis of transcriptional activity in the Arabidopsis genome.</title>
        <authorList>
            <person name="Yamada K."/>
            <person name="Lim J."/>
            <person name="Dale J.M."/>
            <person name="Chen H."/>
            <person name="Shinn P."/>
            <person name="Palm C.J."/>
            <person name="Southwick A.M."/>
            <person name="Wu H.C."/>
            <person name="Kim C.J."/>
            <person name="Nguyen M."/>
            <person name="Pham P.K."/>
            <person name="Cheuk R.F."/>
            <person name="Karlin-Newmann G."/>
            <person name="Liu S.X."/>
            <person name="Lam B."/>
            <person name="Sakano H."/>
            <person name="Wu T."/>
            <person name="Yu G."/>
            <person name="Miranda M."/>
            <person name="Quach H.L."/>
            <person name="Tripp M."/>
            <person name="Chang C.H."/>
            <person name="Lee J.M."/>
            <person name="Toriumi M.J."/>
            <person name="Chan M.M."/>
            <person name="Tang C.C."/>
            <person name="Onodera C.S."/>
            <person name="Deng J.M."/>
            <person name="Akiyama K."/>
            <person name="Ansari Y."/>
            <person name="Arakawa T."/>
            <person name="Banh J."/>
            <person name="Banno F."/>
            <person name="Bowser L."/>
            <person name="Brooks S.Y."/>
            <person name="Carninci P."/>
            <person name="Chao Q."/>
            <person name="Choy N."/>
            <person name="Enju A."/>
            <person name="Goldsmith A.D."/>
            <person name="Gurjal M."/>
            <person name="Hansen N.F."/>
            <person name="Hayashizaki Y."/>
            <person name="Johnson-Hopson C."/>
            <person name="Hsuan V.W."/>
            <person name="Iida K."/>
            <person name="Karnes M."/>
            <person name="Khan S."/>
            <person name="Koesema E."/>
            <person name="Ishida J."/>
            <person name="Jiang P.X."/>
            <person name="Jones T."/>
            <person name="Kawai J."/>
            <person name="Kamiya A."/>
            <person name="Meyers C."/>
            <person name="Nakajima M."/>
            <person name="Narusaka M."/>
            <person name="Seki M."/>
            <person name="Sakurai T."/>
            <person name="Satou M."/>
            <person name="Tamse R."/>
            <person name="Vaysberg M."/>
            <person name="Wallender E.K."/>
            <person name="Wong C."/>
            <person name="Yamamura Y."/>
            <person name="Yuan S."/>
            <person name="Shinozaki K."/>
            <person name="Davis R.W."/>
            <person name="Theologis A."/>
            <person name="Ecker J.R."/>
        </authorList>
    </citation>
    <scope>NUCLEOTIDE SEQUENCE [LARGE SCALE MRNA] OF 1392-1694 AND 1440-1694</scope>
    <source>
        <strain>cv. Columbia</strain>
    </source>
</reference>
<reference key="4">
    <citation type="journal article" date="2009" name="Plant Physiol.">
        <title>Large-scale Arabidopsis phosphoproteome profiling reveals novel chloroplast kinase substrates and phosphorylation networks.</title>
        <authorList>
            <person name="Reiland S."/>
            <person name="Messerli G."/>
            <person name="Baerenfaller K."/>
            <person name="Gerrits B."/>
            <person name="Endler A."/>
            <person name="Grossmann J."/>
            <person name="Gruissem W."/>
            <person name="Baginsky S."/>
        </authorList>
    </citation>
    <scope>PHOSPHORYLATION [LARGE SCALE ANALYSIS] AT SER-806 AND SER-808</scope>
    <scope>IDENTIFICATION BY MASS SPECTROMETRY [LARGE SCALE ANALYSIS]</scope>
</reference>
<reference key="5">
    <citation type="journal article" date="2012" name="Plant J.">
        <title>Imitation Switch chromatin remodeling factors and their interacting RINGLET proteins act together in controlling the plant vegetative phase in Arabidopsis.</title>
        <authorList>
            <person name="Li G."/>
            <person name="Zhang J."/>
            <person name="Li J."/>
            <person name="Yang Z."/>
            <person name="Huang H."/>
            <person name="Xu L."/>
        </authorList>
    </citation>
    <scope>FUNCTION</scope>
    <scope>INTERACTION WITH CHR11</scope>
    <scope>SUBCELLULAR LOCATION</scope>
    <scope>TISSUE SPECIFICITY</scope>
    <scope>DISRUPTION PHENOTYPE</scope>
</reference>
<reference key="6">
    <citation type="journal article" date="2013" name="J. Integr. Plant Biol.">
        <title>SLIDE, the protein interacting domain of Imitation Switch remodelers, binds DDT-domain proteins of different subfamilies in chromatin remodeling complexes.</title>
        <authorList>
            <person name="Dong J."/>
            <person name="Gao Z."/>
            <person name="Liu S."/>
            <person name="Li G."/>
            <person name="Yang Z."/>
            <person name="Huang H."/>
            <person name="Xu L."/>
        </authorList>
    </citation>
    <scope>INTERACTION WITH CHR11</scope>
</reference>
<reference key="7">
    <citation type="journal article" date="2013" name="Plant Cell">
        <title>Gene networks and chromatin and transcriptional regulation of the phaseolin promoter in Arabidopsis.</title>
        <authorList>
            <person name="Sundaram S."/>
            <person name="Kertbundit S."/>
            <person name="Shakirov E.V."/>
            <person name="Iyer L.M."/>
            <person name="Juricek M."/>
            <person name="Hall T.C."/>
        </authorList>
    </citation>
    <scope>FUNCTION</scope>
</reference>
<accession>Q9FFH1</accession>
<accession>Q94B27</accession>
<evidence type="ECO:0000255" key="1">
    <source>
        <dbReference type="PROSITE-ProRule" id="PRU00063"/>
    </source>
</evidence>
<evidence type="ECO:0000255" key="2">
    <source>
        <dbReference type="PROSITE-ProRule" id="PRU00108"/>
    </source>
</evidence>
<evidence type="ECO:0000255" key="3">
    <source>
        <dbReference type="PROSITE-ProRule" id="PRU01261"/>
    </source>
</evidence>
<evidence type="ECO:0000256" key="4">
    <source>
        <dbReference type="SAM" id="MobiDB-lite"/>
    </source>
</evidence>
<evidence type="ECO:0000269" key="5">
    <source>
    </source>
</evidence>
<evidence type="ECO:0000269" key="6">
    <source>
    </source>
</evidence>
<evidence type="ECO:0000269" key="7">
    <source>
    </source>
</evidence>
<evidence type="ECO:0000303" key="8">
    <source>
    </source>
</evidence>
<evidence type="ECO:0000305" key="9"/>
<evidence type="ECO:0000312" key="10">
    <source>
        <dbReference type="Araport" id="AT5G44180"/>
    </source>
</evidence>
<evidence type="ECO:0000312" key="11">
    <source>
        <dbReference type="EMBL" id="AED95070.1"/>
    </source>
</evidence>
<evidence type="ECO:0000312" key="12">
    <source>
        <dbReference type="EMBL" id="BAB10985.1"/>
    </source>
</evidence>
<evidence type="ECO:0007744" key="13">
    <source>
    </source>
</evidence>
<dbReference type="EMBL" id="AB005239">
    <property type="protein sequence ID" value="BAB10985.1"/>
    <property type="molecule type" value="Genomic_DNA"/>
</dbReference>
<dbReference type="EMBL" id="CP002688">
    <property type="protein sequence ID" value="AED95070.1"/>
    <property type="molecule type" value="Genomic_DNA"/>
</dbReference>
<dbReference type="EMBL" id="CP002688">
    <property type="protein sequence ID" value="ANM68709.1"/>
    <property type="molecule type" value="Genomic_DNA"/>
</dbReference>
<dbReference type="EMBL" id="AY042893">
    <property type="protein sequence ID" value="AAK68833.1"/>
    <property type="status" value="ALT_INIT"/>
    <property type="molecule type" value="mRNA"/>
</dbReference>
<dbReference type="EMBL" id="AY072465">
    <property type="protein sequence ID" value="AAL66880.1"/>
    <property type="molecule type" value="mRNA"/>
</dbReference>
<dbReference type="RefSeq" id="NP_001318738.1">
    <molecule id="Q9FFH1-1"/>
    <property type="nucleotide sequence ID" value="NM_001344536.1"/>
</dbReference>
<dbReference type="RefSeq" id="NP_199231.1">
    <molecule id="Q9FFH1-1"/>
    <property type="nucleotide sequence ID" value="NM_123785.1"/>
</dbReference>
<dbReference type="SMR" id="Q9FFH1"/>
<dbReference type="FunCoup" id="Q9FFH1">
    <property type="interactions" value="1475"/>
</dbReference>
<dbReference type="STRING" id="3702.Q9FFH1"/>
<dbReference type="iPTMnet" id="Q9FFH1"/>
<dbReference type="PaxDb" id="3702-AT5G44180.1"/>
<dbReference type="ProteomicsDB" id="228161">
    <molecule id="Q9FFH1-1"/>
</dbReference>
<dbReference type="EnsemblPlants" id="AT5G44180.1">
    <molecule id="Q9FFH1-1"/>
    <property type="protein sequence ID" value="AT5G44180.1"/>
    <property type="gene ID" value="AT5G44180"/>
</dbReference>
<dbReference type="EnsemblPlants" id="AT5G44180.3">
    <molecule id="Q9FFH1-1"/>
    <property type="protein sequence ID" value="AT5G44180.3"/>
    <property type="gene ID" value="AT5G44180"/>
</dbReference>
<dbReference type="GeneID" id="834441"/>
<dbReference type="Gramene" id="AT5G44180.1">
    <molecule id="Q9FFH1-1"/>
    <property type="protein sequence ID" value="AT5G44180.1"/>
    <property type="gene ID" value="AT5G44180"/>
</dbReference>
<dbReference type="Gramene" id="AT5G44180.3">
    <molecule id="Q9FFH1-1"/>
    <property type="protein sequence ID" value="AT5G44180.3"/>
    <property type="gene ID" value="AT5G44180"/>
</dbReference>
<dbReference type="KEGG" id="ath:AT5G44180"/>
<dbReference type="Araport" id="AT5G44180"/>
<dbReference type="TAIR" id="AT5G44180">
    <property type="gene designation" value="RLT2"/>
</dbReference>
<dbReference type="eggNOG" id="ENOG502QQYM">
    <property type="taxonomic scope" value="Eukaryota"/>
</dbReference>
<dbReference type="InParanoid" id="Q9FFH1"/>
<dbReference type="OMA" id="RYYEMTH"/>
<dbReference type="PhylomeDB" id="Q9FFH1"/>
<dbReference type="PRO" id="PR:Q9FFH1"/>
<dbReference type="Proteomes" id="UP000006548">
    <property type="component" value="Chromosome 5"/>
</dbReference>
<dbReference type="ExpressionAtlas" id="Q9FFH1">
    <property type="expression patterns" value="baseline and differential"/>
</dbReference>
<dbReference type="GO" id="GO:0031010">
    <property type="term" value="C:ISWI-type complex"/>
    <property type="evidence" value="ECO:0000314"/>
    <property type="project" value="TAIR"/>
</dbReference>
<dbReference type="GO" id="GO:0005634">
    <property type="term" value="C:nucleus"/>
    <property type="evidence" value="ECO:0000314"/>
    <property type="project" value="TAIR"/>
</dbReference>
<dbReference type="GO" id="GO:0003700">
    <property type="term" value="F:DNA-binding transcription factor activity"/>
    <property type="evidence" value="ECO:0000250"/>
    <property type="project" value="TAIR"/>
</dbReference>
<dbReference type="GO" id="GO:0000976">
    <property type="term" value="F:transcription cis-regulatory region binding"/>
    <property type="evidence" value="ECO:0000353"/>
    <property type="project" value="TAIR"/>
</dbReference>
<dbReference type="GO" id="GO:0009908">
    <property type="term" value="P:flower development"/>
    <property type="evidence" value="ECO:0007669"/>
    <property type="project" value="UniProtKB-KW"/>
</dbReference>
<dbReference type="GO" id="GO:0045892">
    <property type="term" value="P:negative regulation of DNA-templated transcription"/>
    <property type="evidence" value="ECO:0000315"/>
    <property type="project" value="UniProtKB"/>
</dbReference>
<dbReference type="GO" id="GO:0006357">
    <property type="term" value="P:regulation of transcription by RNA polymerase II"/>
    <property type="evidence" value="ECO:0007669"/>
    <property type="project" value="InterPro"/>
</dbReference>
<dbReference type="GO" id="GO:0010228">
    <property type="term" value="P:vegetative to reproductive phase transition of meristem"/>
    <property type="evidence" value="ECO:0000316"/>
    <property type="project" value="TAIR"/>
</dbReference>
<dbReference type="CDD" id="cd00086">
    <property type="entry name" value="homeodomain"/>
    <property type="match status" value="1"/>
</dbReference>
<dbReference type="Gene3D" id="1.10.10.60">
    <property type="entry name" value="Homeodomain-like"/>
    <property type="match status" value="1"/>
</dbReference>
<dbReference type="InterPro" id="IPR007759">
    <property type="entry name" value="Asxl_HARE-HTH"/>
</dbReference>
<dbReference type="InterPro" id="IPR018501">
    <property type="entry name" value="DDT_dom"/>
</dbReference>
<dbReference type="InterPro" id="IPR001356">
    <property type="entry name" value="HD"/>
</dbReference>
<dbReference type="InterPro" id="IPR009057">
    <property type="entry name" value="Homeodomain-like_sf"/>
</dbReference>
<dbReference type="InterPro" id="IPR044977">
    <property type="entry name" value="RLT1-3"/>
</dbReference>
<dbReference type="InterPro" id="IPR028942">
    <property type="entry name" value="WHIM1_dom"/>
</dbReference>
<dbReference type="InterPro" id="IPR028941">
    <property type="entry name" value="WHIM2_dom"/>
</dbReference>
<dbReference type="PANTHER" id="PTHR36968">
    <property type="entry name" value="HOMEOBOX-DDT DOMAIN PROTEIN RLT2"/>
    <property type="match status" value="1"/>
</dbReference>
<dbReference type="PANTHER" id="PTHR36968:SF5">
    <property type="entry name" value="HOMEOBOX-DDT DOMAIN PROTEIN RLT2"/>
    <property type="match status" value="1"/>
</dbReference>
<dbReference type="Pfam" id="PF02791">
    <property type="entry name" value="DDT"/>
    <property type="match status" value="1"/>
</dbReference>
<dbReference type="Pfam" id="PF05066">
    <property type="entry name" value="HARE-HTH"/>
    <property type="match status" value="1"/>
</dbReference>
<dbReference type="Pfam" id="PF00046">
    <property type="entry name" value="Homeodomain"/>
    <property type="match status" value="1"/>
</dbReference>
<dbReference type="Pfam" id="PF15612">
    <property type="entry name" value="WHIM1"/>
    <property type="match status" value="1"/>
</dbReference>
<dbReference type="Pfam" id="PF15613">
    <property type="entry name" value="WSD"/>
    <property type="match status" value="1"/>
</dbReference>
<dbReference type="SMART" id="SM00571">
    <property type="entry name" value="DDT"/>
    <property type="match status" value="1"/>
</dbReference>
<dbReference type="SMART" id="SM00389">
    <property type="entry name" value="HOX"/>
    <property type="match status" value="1"/>
</dbReference>
<dbReference type="SUPFAM" id="SSF46689">
    <property type="entry name" value="Homeodomain-like"/>
    <property type="match status" value="1"/>
</dbReference>
<dbReference type="PROSITE" id="PS50827">
    <property type="entry name" value="DDT"/>
    <property type="match status" value="1"/>
</dbReference>
<dbReference type="PROSITE" id="PS50071">
    <property type="entry name" value="HOMEOBOX_2"/>
    <property type="match status" value="1"/>
</dbReference>
<dbReference type="PROSITE" id="PS51913">
    <property type="entry name" value="HTH_HARE"/>
    <property type="match status" value="1"/>
</dbReference>
<feature type="chain" id="PRO_0000435114" description="Homeobox-DDT domain protein RLT2">
    <location>
        <begin position="1"/>
        <end position="1694"/>
    </location>
</feature>
<feature type="domain" description="DDT" evidence="1">
    <location>
        <begin position="514"/>
        <end position="573"/>
    </location>
</feature>
<feature type="domain" description="HTH HARE-type" evidence="3">
    <location>
        <begin position="696"/>
        <end position="765"/>
    </location>
</feature>
<feature type="DNA-binding region" description="Homeobox" evidence="2">
    <location>
        <begin position="17"/>
        <end position="76"/>
    </location>
</feature>
<feature type="region of interest" description="Disordered" evidence="4">
    <location>
        <begin position="1"/>
        <end position="24"/>
    </location>
</feature>
<feature type="region of interest" description="Disordered" evidence="4">
    <location>
        <begin position="795"/>
        <end position="822"/>
    </location>
</feature>
<feature type="region of interest" description="Disordered" evidence="4">
    <location>
        <begin position="1450"/>
        <end position="1541"/>
    </location>
</feature>
<feature type="region of interest" description="Disordered" evidence="4">
    <location>
        <begin position="1555"/>
        <end position="1639"/>
    </location>
</feature>
<feature type="region of interest" description="Disordered" evidence="4">
    <location>
        <begin position="1655"/>
        <end position="1674"/>
    </location>
</feature>
<feature type="compositionally biased region" description="Acidic residues" evidence="4">
    <location>
        <begin position="795"/>
        <end position="816"/>
    </location>
</feature>
<feature type="compositionally biased region" description="Gly residues" evidence="4">
    <location>
        <begin position="1459"/>
        <end position="1470"/>
    </location>
</feature>
<feature type="compositionally biased region" description="Basic residues" evidence="4">
    <location>
        <begin position="1471"/>
        <end position="1485"/>
    </location>
</feature>
<feature type="compositionally biased region" description="Basic residues" evidence="4">
    <location>
        <begin position="1515"/>
        <end position="1531"/>
    </location>
</feature>
<feature type="compositionally biased region" description="Acidic residues" evidence="4">
    <location>
        <begin position="1561"/>
        <end position="1578"/>
    </location>
</feature>
<feature type="compositionally biased region" description="Acidic residues" evidence="4">
    <location>
        <begin position="1589"/>
        <end position="1605"/>
    </location>
</feature>
<feature type="compositionally biased region" description="Acidic residues" evidence="4">
    <location>
        <begin position="1624"/>
        <end position="1635"/>
    </location>
</feature>
<feature type="modified residue" description="Phosphoserine" evidence="13">
    <location>
        <position position="806"/>
    </location>
</feature>
<feature type="modified residue" description="Phosphoserine" evidence="13">
    <location>
        <position position="808"/>
    </location>
</feature>
<feature type="sequence conflict" description="In Ref. 3; AAK68833/AAL66880." evidence="9" ref="3">
    <original>T</original>
    <variation>A</variation>
    <location>
        <position position="1673"/>
    </location>
</feature>
<keyword id="KW-0025">Alternative splicing</keyword>
<keyword id="KW-0238">DNA-binding</keyword>
<keyword id="KW-0287">Flowering</keyword>
<keyword id="KW-0371">Homeobox</keyword>
<keyword id="KW-0539">Nucleus</keyword>
<keyword id="KW-0597">Phosphoprotein</keyword>
<keyword id="KW-1185">Reference proteome</keyword>
<keyword id="KW-0804">Transcription</keyword>
<keyword id="KW-0805">Transcription regulation</keyword>
<gene>
    <name evidence="8" type="primary">RLT2</name>
    <name evidence="10 11" type="ordered locus">At5g44180</name>
    <name evidence="12" type="ORF">MLN1.10</name>
</gene>
<protein>
    <recommendedName>
        <fullName evidence="9">Homeobox-DDT domain protein RLT2</fullName>
    </recommendedName>
    <alternativeName>
        <fullName evidence="8">Protein RINGLET 2</fullName>
    </alternativeName>
</protein>
<name>RLT2_ARATH</name>